<reference key="1">
    <citation type="journal article" date="1998" name="Science">
        <title>Complete genome sequence of Treponema pallidum, the syphilis spirochete.</title>
        <authorList>
            <person name="Fraser C.M."/>
            <person name="Norris S.J."/>
            <person name="Weinstock G.M."/>
            <person name="White O."/>
            <person name="Sutton G.G."/>
            <person name="Dodson R.J."/>
            <person name="Gwinn M.L."/>
            <person name="Hickey E.K."/>
            <person name="Clayton R.A."/>
            <person name="Ketchum K.A."/>
            <person name="Sodergren E."/>
            <person name="Hardham J.M."/>
            <person name="McLeod M.P."/>
            <person name="Salzberg S.L."/>
            <person name="Peterson J.D."/>
            <person name="Khalak H.G."/>
            <person name="Richardson D.L."/>
            <person name="Howell J.K."/>
            <person name="Chidambaram M."/>
            <person name="Utterback T.R."/>
            <person name="McDonald L.A."/>
            <person name="Artiach P."/>
            <person name="Bowman C."/>
            <person name="Cotton M.D."/>
            <person name="Fujii C."/>
            <person name="Garland S.A."/>
            <person name="Hatch B."/>
            <person name="Horst K."/>
            <person name="Roberts K.M."/>
            <person name="Sandusky M."/>
            <person name="Weidman J.F."/>
            <person name="Smith H.O."/>
            <person name="Venter J.C."/>
        </authorList>
    </citation>
    <scope>NUCLEOTIDE SEQUENCE [LARGE SCALE GENOMIC DNA]</scope>
    <source>
        <strain>Nichols</strain>
    </source>
</reference>
<protein>
    <recommendedName>
        <fullName>Uncharacterized lipoprotein TP_0134</fullName>
    </recommendedName>
</protein>
<proteinExistence type="inferred from homology"/>
<feature type="signal peptide" evidence="1">
    <location>
        <begin position="1"/>
        <end position="28"/>
    </location>
</feature>
<feature type="chain" id="PRO_0000018066" description="Uncharacterized lipoprotein TP_0134">
    <location>
        <begin position="29"/>
        <end position="376"/>
    </location>
</feature>
<feature type="lipid moiety-binding region" description="N-palmitoyl cysteine" evidence="1">
    <location>
        <position position="29"/>
    </location>
</feature>
<feature type="lipid moiety-binding region" description="S-diacylglycerol cysteine" evidence="1">
    <location>
        <position position="29"/>
    </location>
</feature>
<organism>
    <name type="scientific">Treponema pallidum (strain Nichols)</name>
    <dbReference type="NCBI Taxonomy" id="243276"/>
    <lineage>
        <taxon>Bacteria</taxon>
        <taxon>Pseudomonadati</taxon>
        <taxon>Spirochaetota</taxon>
        <taxon>Spirochaetia</taxon>
        <taxon>Spirochaetales</taxon>
        <taxon>Treponemataceae</taxon>
        <taxon>Treponema</taxon>
    </lineage>
</organism>
<name>Y134_TREPA</name>
<keyword id="KW-1003">Cell membrane</keyword>
<keyword id="KW-0449">Lipoprotein</keyword>
<keyword id="KW-0472">Membrane</keyword>
<keyword id="KW-0564">Palmitate</keyword>
<keyword id="KW-1185">Reference proteome</keyword>
<keyword id="KW-0732">Signal</keyword>
<dbReference type="EMBL" id="AE000520">
    <property type="protein sequence ID" value="AAC65125.1"/>
    <property type="molecule type" value="Genomic_DNA"/>
</dbReference>
<dbReference type="PIR" id="C71363">
    <property type="entry name" value="C71363"/>
</dbReference>
<dbReference type="RefSeq" id="WP_010881582.1">
    <property type="nucleotide sequence ID" value="NC_021490.2"/>
</dbReference>
<dbReference type="IntAct" id="O83170">
    <property type="interactions" value="3"/>
</dbReference>
<dbReference type="STRING" id="243276.TP_0134"/>
<dbReference type="EnsemblBacteria" id="AAC65125">
    <property type="protein sequence ID" value="AAC65125"/>
    <property type="gene ID" value="TP_0134"/>
</dbReference>
<dbReference type="KEGG" id="tpa:TP_0134"/>
<dbReference type="KEGG" id="tpw:TPANIC_0134"/>
<dbReference type="eggNOG" id="ENOG5030DBM">
    <property type="taxonomic scope" value="Bacteria"/>
</dbReference>
<dbReference type="HOGENOM" id="CLU_056007_0_0_12"/>
<dbReference type="OrthoDB" id="360690at2"/>
<dbReference type="Proteomes" id="UP000000811">
    <property type="component" value="Chromosome"/>
</dbReference>
<dbReference type="GO" id="GO:0005886">
    <property type="term" value="C:plasma membrane"/>
    <property type="evidence" value="ECO:0007669"/>
    <property type="project" value="UniProtKB-SubCell"/>
</dbReference>
<gene>
    <name type="ordered locus">TP_0134</name>
</gene>
<accession>O83170</accession>
<sequence>MCKPRVWRIAHTIVHVGALLLGTSQLTTCDFSGIFATIQQEVAIKSPSIPGAIYGLVKAGDKLYATNGRLWEKELNGIKWKPVPFLDGQDKRIDSLAASNTCVFACVSGDGVYKYTAGTTSSQKESNTDKAQAVVQMSDGKVVLQCALGDEKTTPSDADERLLGGGQGYLVTSKGFYTLPGSASCEVISETKDVTCKAEAPILASACDGSNTYILTKDKVYCRYTNGSGSTPTTWCDVEHKVSEPLALAVFKNKGETFLLVGGQQGYGEIKIATASGSSSSSSCVPLTAENVHATTGWGANCSTPEGSAEQYRSTIGRWAVSGIYVIKKDTSGGRKKRSTSTDCERPDLYVAVGDASDTYTGLWKFDTATNTWNRE</sequence>
<comment type="subcellular location">
    <subcellularLocation>
        <location evidence="2">Cell membrane</location>
        <topology evidence="2">Lipid-anchor</topology>
    </subcellularLocation>
</comment>
<comment type="similarity">
    <text evidence="2">Belongs to the TP013X lipoprotein family.</text>
</comment>
<evidence type="ECO:0000255" key="1"/>
<evidence type="ECO:0000305" key="2"/>